<reference key="1">
    <citation type="journal article" date="2011" name="J. Bacteriol.">
        <title>Complete genome sequence of the Thermophilic Bacterium Exiguobacterium sp. AT1b.</title>
        <authorList>
            <person name="Vishnivetskaya T.A."/>
            <person name="Lucas S."/>
            <person name="Copeland A."/>
            <person name="Lapidus A."/>
            <person name="Glavina del Rio T."/>
            <person name="Dalin E."/>
            <person name="Tice H."/>
            <person name="Bruce D.C."/>
            <person name="Goodwin L.A."/>
            <person name="Pitluck S."/>
            <person name="Saunders E."/>
            <person name="Brettin T."/>
            <person name="Detter C."/>
            <person name="Han C."/>
            <person name="Larimer F."/>
            <person name="Land M.L."/>
            <person name="Hauser L.J."/>
            <person name="Kyrpides N.C."/>
            <person name="Ovchinnikova G."/>
            <person name="Kathariou S."/>
            <person name="Ramaley R.F."/>
            <person name="Rodrigues D.F."/>
            <person name="Hendrix C."/>
            <person name="Richardson P."/>
            <person name="Tiedje J.M."/>
        </authorList>
    </citation>
    <scope>NUCLEOTIDE SEQUENCE [LARGE SCALE GENOMIC DNA]</scope>
    <source>
        <strain>ATCC BAA-1283 / AT1b</strain>
    </source>
</reference>
<accession>C4L3F7</accession>
<feature type="chain" id="PRO_1000202480" description="Transcription antitermination protein NusB">
    <location>
        <begin position="1"/>
        <end position="128"/>
    </location>
</feature>
<protein>
    <recommendedName>
        <fullName evidence="1">Transcription antitermination protein NusB</fullName>
    </recommendedName>
    <alternativeName>
        <fullName evidence="1">Antitermination factor NusB</fullName>
    </alternativeName>
</protein>
<comment type="function">
    <text evidence="1">Involved in transcription antitermination. Required for transcription of ribosomal RNA (rRNA) genes. Binds specifically to the boxA antiterminator sequence of the ribosomal RNA (rrn) operons.</text>
</comment>
<comment type="similarity">
    <text evidence="1">Belongs to the NusB family.</text>
</comment>
<gene>
    <name evidence="1" type="primary">nusB</name>
    <name type="ordered locus">EAT1b_0523</name>
</gene>
<proteinExistence type="inferred from homology"/>
<evidence type="ECO:0000255" key="1">
    <source>
        <dbReference type="HAMAP-Rule" id="MF_00073"/>
    </source>
</evidence>
<dbReference type="EMBL" id="CP001615">
    <property type="protein sequence ID" value="ACQ69455.1"/>
    <property type="molecule type" value="Genomic_DNA"/>
</dbReference>
<dbReference type="RefSeq" id="WP_012726574.1">
    <property type="nucleotide sequence ID" value="NC_012673.1"/>
</dbReference>
<dbReference type="SMR" id="C4L3F7"/>
<dbReference type="STRING" id="360911.EAT1b_0523"/>
<dbReference type="KEGG" id="eat:EAT1b_0523"/>
<dbReference type="eggNOG" id="COG0781">
    <property type="taxonomic scope" value="Bacteria"/>
</dbReference>
<dbReference type="HOGENOM" id="CLU_087843_3_3_9"/>
<dbReference type="OrthoDB" id="9811381at2"/>
<dbReference type="Proteomes" id="UP000000716">
    <property type="component" value="Chromosome"/>
</dbReference>
<dbReference type="GO" id="GO:0005829">
    <property type="term" value="C:cytosol"/>
    <property type="evidence" value="ECO:0007669"/>
    <property type="project" value="TreeGrafter"/>
</dbReference>
<dbReference type="GO" id="GO:0003723">
    <property type="term" value="F:RNA binding"/>
    <property type="evidence" value="ECO:0007669"/>
    <property type="project" value="UniProtKB-UniRule"/>
</dbReference>
<dbReference type="GO" id="GO:0006353">
    <property type="term" value="P:DNA-templated transcription termination"/>
    <property type="evidence" value="ECO:0007669"/>
    <property type="project" value="UniProtKB-UniRule"/>
</dbReference>
<dbReference type="GO" id="GO:0031564">
    <property type="term" value="P:transcription antitermination"/>
    <property type="evidence" value="ECO:0007669"/>
    <property type="project" value="UniProtKB-KW"/>
</dbReference>
<dbReference type="CDD" id="cd00619">
    <property type="entry name" value="Terminator_NusB"/>
    <property type="match status" value="1"/>
</dbReference>
<dbReference type="Gene3D" id="1.10.940.10">
    <property type="entry name" value="NusB-like"/>
    <property type="match status" value="1"/>
</dbReference>
<dbReference type="HAMAP" id="MF_00073">
    <property type="entry name" value="NusB"/>
    <property type="match status" value="1"/>
</dbReference>
<dbReference type="InterPro" id="IPR035926">
    <property type="entry name" value="NusB-like_sf"/>
</dbReference>
<dbReference type="InterPro" id="IPR011605">
    <property type="entry name" value="NusB_fam"/>
</dbReference>
<dbReference type="InterPro" id="IPR006027">
    <property type="entry name" value="NusB_RsmB_TIM44"/>
</dbReference>
<dbReference type="NCBIfam" id="TIGR01951">
    <property type="entry name" value="nusB"/>
    <property type="match status" value="1"/>
</dbReference>
<dbReference type="PANTHER" id="PTHR11078:SF3">
    <property type="entry name" value="ANTITERMINATION NUSB DOMAIN-CONTAINING PROTEIN"/>
    <property type="match status" value="1"/>
</dbReference>
<dbReference type="PANTHER" id="PTHR11078">
    <property type="entry name" value="N UTILIZATION SUBSTANCE PROTEIN B-RELATED"/>
    <property type="match status" value="1"/>
</dbReference>
<dbReference type="Pfam" id="PF01029">
    <property type="entry name" value="NusB"/>
    <property type="match status" value="1"/>
</dbReference>
<dbReference type="SUPFAM" id="SSF48013">
    <property type="entry name" value="NusB-like"/>
    <property type="match status" value="1"/>
</dbReference>
<sequence length="128" mass="14588">MKRHEAREKAIQTLFQIEVSKLEVDEAIEFALDGEESDPFYEQLVTGTLEHIEDIDALLVENLKNWRLDRLGNVERTILRMATFELLYVETIPENVTINEAVELAKSFGDEEAGKLVNGVLGNIIKED</sequence>
<organism>
    <name type="scientific">Exiguobacterium sp. (strain ATCC BAA-1283 / AT1b)</name>
    <dbReference type="NCBI Taxonomy" id="360911"/>
    <lineage>
        <taxon>Bacteria</taxon>
        <taxon>Bacillati</taxon>
        <taxon>Bacillota</taxon>
        <taxon>Bacilli</taxon>
        <taxon>Bacillales</taxon>
        <taxon>Bacillales Family XII. Incertae Sedis</taxon>
        <taxon>Exiguobacterium</taxon>
    </lineage>
</organism>
<keyword id="KW-0694">RNA-binding</keyword>
<keyword id="KW-0804">Transcription</keyword>
<keyword id="KW-0889">Transcription antitermination</keyword>
<keyword id="KW-0805">Transcription regulation</keyword>
<name>NUSB_EXISA</name>